<feature type="chain" id="PRO_0000079326" description="Death domain-containing protein CRADD">
    <location>
        <begin position="1"/>
        <end position="199"/>
    </location>
</feature>
<feature type="domain" description="CARD" evidence="2">
    <location>
        <begin position="1"/>
        <end position="91"/>
    </location>
</feature>
<feature type="domain" description="Death" evidence="3">
    <location>
        <begin position="116"/>
        <end position="188"/>
    </location>
</feature>
<feature type="splice variant" id="VSP_056892" description="In isoform 2." evidence="11">
    <original>DRLTGIPSHILNSSPSDRQINQLAQRLGPEWEPMVLSLGLSQTDIYRCKANHPHNVQSQVVEAFIRWRQRFGKQATFQSLHNGLRAVEVDPSLLLHMLE</original>
    <variation>CWP</variation>
    <location>
        <begin position="101"/>
        <end position="199"/>
    </location>
</feature>
<feature type="sequence variant" id="VAR_067536" description="In MRT34; dbSNP:rs387906861." evidence="8">
    <original>G</original>
    <variation>R</variation>
    <location>
        <position position="128"/>
    </location>
</feature>
<feature type="mutagenesis site" description="Loss of interaction with CASP2." evidence="9">
    <original>L</original>
    <variation>F</variation>
    <location>
        <position position="27"/>
    </location>
</feature>
<feature type="mutagenesis site" description="Loss of interaction with CASP2." evidence="9">
    <original>G</original>
    <variation>A</variation>
    <location>
        <position position="65"/>
    </location>
</feature>
<feature type="mutagenesis site" description="Loss of interaction with PIDD1." evidence="7">
    <original>N</original>
    <variation>D</variation>
    <location>
        <position position="121"/>
    </location>
</feature>
<feature type="mutagenesis site" description="Loss of interaction with PIDD1." evidence="7">
    <original>Q</original>
    <variation>A</variation>
    <location>
        <position position="125"/>
    </location>
</feature>
<feature type="mutagenesis site" description="Partial loss of interaction with PIDD1." evidence="7">
    <original>L</original>
    <variation>E</variation>
    <location>
        <position position="136"/>
    </location>
</feature>
<feature type="mutagenesis site" description="Partial loss of interaction with PIDD1." evidence="7">
    <original>Q</original>
    <variation>E</variation>
    <location>
        <position position="142"/>
    </location>
</feature>
<feature type="mutagenesis site" description="Loss of interaction with PIDD1. Decreased PIDDosome assembly. Decreased CASP2 activation." evidence="7">
    <original>Y</original>
    <variation>A</variation>
    <location>
        <position position="146"/>
    </location>
</feature>
<feature type="mutagenesis site" description="Loss of interaction with PIDD1. Decreased PIDDosome assembly. Decreased CASP2 activation." evidence="7">
    <original>R</original>
    <variation>A</variation>
    <location>
        <position position="147"/>
    </location>
</feature>
<feature type="mutagenesis site" description="Loss of interaction with PIDD1. Loss of PIDDosome assembly. Loss of CASP2 activation." evidence="7">
    <original>R</original>
    <variation>E</variation>
    <location>
        <position position="147"/>
    </location>
</feature>
<feature type="mutagenesis site" description="Loss of interaction with PIDD1." evidence="7">
    <original>K</original>
    <variation>E</variation>
    <location>
        <position position="149"/>
    </location>
</feature>
<feature type="mutagenesis site" description="Partial loss of interaction with PIDD1." evidence="7">
    <original>H</original>
    <variation>A</variation>
    <location>
        <position position="154"/>
    </location>
</feature>
<feature type="mutagenesis site" description="Loss of interaction with PIDD1. Loss of PIDDosome assembly. Loss of CASP2 activation." evidence="7">
    <original>V</original>
    <variation>D</variation>
    <location>
        <position position="156"/>
    </location>
</feature>
<feature type="mutagenesis site" description="Partial loss of interaction with PIDD1. Decreased PIDDosome assembly. Decreased CASP2 activation." evidence="7">
    <original>Q</original>
    <variation>A</variation>
    <location>
        <position position="169"/>
    </location>
</feature>
<feature type="mutagenesis site" description="Loss of interaction with PIDD1." evidence="7">
    <original>Q</original>
    <variation>E</variation>
    <location>
        <position position="169"/>
    </location>
</feature>
<feature type="mutagenesis site" description="Partial loss of interaction with PIDD1." evidence="7">
    <original>R</original>
    <variation>A</variation>
    <location>
        <position position="170"/>
    </location>
</feature>
<feature type="mutagenesis site" description="No effect on interaction with PIDD1." evidence="7">
    <original>E</original>
    <variation>K</variation>
    <location>
        <position position="188"/>
    </location>
</feature>
<feature type="mutagenesis site" description="No effect on interaction with PIDD1." evidence="7">
    <original>V</original>
    <variation>W</variation>
    <variation>D</variation>
    <location>
        <position position="189"/>
    </location>
</feature>
<feature type="helix" evidence="14">
    <location>
        <begin position="5"/>
        <end position="18"/>
    </location>
</feature>
<feature type="helix" evidence="14">
    <location>
        <begin position="27"/>
        <end position="33"/>
    </location>
</feature>
<feature type="helix" evidence="14">
    <location>
        <begin position="38"/>
        <end position="44"/>
    </location>
</feature>
<feature type="strand" evidence="14">
    <location>
        <begin position="48"/>
        <end position="50"/>
    </location>
</feature>
<feature type="helix" evidence="14">
    <location>
        <begin position="51"/>
        <end position="60"/>
    </location>
</feature>
<feature type="turn" evidence="14">
    <location>
        <begin position="61"/>
        <end position="63"/>
    </location>
</feature>
<feature type="helix" evidence="14">
    <location>
        <begin position="69"/>
        <end position="75"/>
    </location>
</feature>
<feature type="helix" evidence="14">
    <location>
        <begin position="79"/>
        <end position="92"/>
    </location>
</feature>
<feature type="helix" evidence="13">
    <location>
        <begin position="110"/>
        <end position="112"/>
    </location>
</feature>
<feature type="helix" evidence="13">
    <location>
        <begin position="117"/>
        <end position="126"/>
    </location>
</feature>
<feature type="helix" evidence="13">
    <location>
        <begin position="131"/>
        <end position="137"/>
    </location>
</feature>
<feature type="helix" evidence="13">
    <location>
        <begin position="142"/>
        <end position="151"/>
    </location>
</feature>
<feature type="helix" evidence="13">
    <location>
        <begin position="156"/>
        <end position="171"/>
    </location>
</feature>
<feature type="helix" evidence="13">
    <location>
        <begin position="172"/>
        <end position="174"/>
    </location>
</feature>
<feature type="helix" evidence="13">
    <location>
        <begin position="177"/>
        <end position="186"/>
    </location>
</feature>
<feature type="helix" evidence="13">
    <location>
        <begin position="192"/>
        <end position="197"/>
    </location>
</feature>
<dbReference type="EMBL" id="U84388">
    <property type="protein sequence ID" value="AAC50952.1"/>
    <property type="molecule type" value="mRNA"/>
</dbReference>
<dbReference type="EMBL" id="U79115">
    <property type="protein sequence ID" value="AAB42217.1"/>
    <property type="molecule type" value="mRNA"/>
</dbReference>
<dbReference type="EMBL" id="AK294986">
    <property type="protein sequence ID" value="BAH11941.1"/>
    <property type="molecule type" value="mRNA"/>
</dbReference>
<dbReference type="EMBL" id="AC012085">
    <property type="status" value="NOT_ANNOTATED_CDS"/>
    <property type="molecule type" value="Genomic_DNA"/>
</dbReference>
<dbReference type="EMBL" id="AC012464">
    <property type="status" value="NOT_ANNOTATED_CDS"/>
    <property type="molecule type" value="Genomic_DNA"/>
</dbReference>
<dbReference type="EMBL" id="AC025261">
    <property type="status" value="NOT_ANNOTATED_CDS"/>
    <property type="molecule type" value="Genomic_DNA"/>
</dbReference>
<dbReference type="EMBL" id="BC017042">
    <property type="protein sequence ID" value="AAH17042.1"/>
    <property type="molecule type" value="mRNA"/>
</dbReference>
<dbReference type="CCDS" id="CCDS9048.1">
    <molecule id="P78560-1"/>
</dbReference>
<dbReference type="RefSeq" id="NP_001307028.1">
    <molecule id="P78560-1"/>
    <property type="nucleotide sequence ID" value="NM_001320099.2"/>
</dbReference>
<dbReference type="RefSeq" id="NP_001307029.1">
    <property type="nucleotide sequence ID" value="NM_001320100.1"/>
</dbReference>
<dbReference type="RefSeq" id="NP_001307030.1">
    <property type="nucleotide sequence ID" value="NM_001320101.1"/>
</dbReference>
<dbReference type="RefSeq" id="NP_003796.1">
    <molecule id="P78560-1"/>
    <property type="nucleotide sequence ID" value="NM_003805.5"/>
</dbReference>
<dbReference type="RefSeq" id="XP_016875633.1">
    <property type="nucleotide sequence ID" value="XM_017020144.1"/>
</dbReference>
<dbReference type="RefSeq" id="XP_047285761.1">
    <molecule id="P78560-2"/>
    <property type="nucleotide sequence ID" value="XM_047429805.1"/>
</dbReference>
<dbReference type="RefSeq" id="XP_054229680.1">
    <molecule id="P78560-2"/>
    <property type="nucleotide sequence ID" value="XM_054373705.1"/>
</dbReference>
<dbReference type="PDB" id="2O71">
    <property type="method" value="X-ray"/>
    <property type="resolution" value="2.00 A"/>
    <property type="chains" value="A=94-199"/>
</dbReference>
<dbReference type="PDB" id="2OF5">
    <property type="method" value="X-ray"/>
    <property type="resolution" value="3.20 A"/>
    <property type="chains" value="A/B/C/D/E/F/G=94-199"/>
</dbReference>
<dbReference type="PDB" id="3CRD">
    <property type="method" value="NMR"/>
    <property type="chains" value="A=1-100"/>
</dbReference>
<dbReference type="PDBsum" id="2O71"/>
<dbReference type="PDBsum" id="2OF5"/>
<dbReference type="PDBsum" id="3CRD"/>
<dbReference type="SMR" id="P78560"/>
<dbReference type="BioGRID" id="114275">
    <property type="interactions" value="26"/>
</dbReference>
<dbReference type="ComplexPortal" id="CPX-3905">
    <property type="entry name" value="Caspase-2 PIDDosome"/>
</dbReference>
<dbReference type="CORUM" id="P78560"/>
<dbReference type="FunCoup" id="P78560">
    <property type="interactions" value="796"/>
</dbReference>
<dbReference type="IntAct" id="P78560">
    <property type="interactions" value="21"/>
</dbReference>
<dbReference type="MINT" id="P78560"/>
<dbReference type="STRING" id="9606.ENSP00000439068"/>
<dbReference type="iPTMnet" id="P78560"/>
<dbReference type="MetOSite" id="P78560"/>
<dbReference type="PhosphoSitePlus" id="P78560"/>
<dbReference type="BioMuta" id="CRADD"/>
<dbReference type="DMDM" id="2498833"/>
<dbReference type="jPOST" id="P78560"/>
<dbReference type="MassIVE" id="P78560"/>
<dbReference type="PaxDb" id="9606-ENSP00000439068"/>
<dbReference type="PeptideAtlas" id="P78560"/>
<dbReference type="ProteomicsDB" id="57654">
    <molecule id="P78560-1"/>
</dbReference>
<dbReference type="ProteomicsDB" id="6451"/>
<dbReference type="Pumba" id="P78560"/>
<dbReference type="Antibodypedia" id="3943">
    <property type="antibodies" value="537 antibodies from 38 providers"/>
</dbReference>
<dbReference type="DNASU" id="8738"/>
<dbReference type="Ensembl" id="ENST00000332896.8">
    <molecule id="P78560-1"/>
    <property type="protein sequence ID" value="ENSP00000327647.3"/>
    <property type="gene ID" value="ENSG00000169372.13"/>
</dbReference>
<dbReference type="Ensembl" id="ENST00000542893.2">
    <molecule id="P78560-1"/>
    <property type="protein sequence ID" value="ENSP00000439068.2"/>
    <property type="gene ID" value="ENSG00000169372.13"/>
</dbReference>
<dbReference type="Ensembl" id="ENST00000551065.5">
    <molecule id="P78560-2"/>
    <property type="protein sequence ID" value="ENSP00000448425.1"/>
    <property type="gene ID" value="ENSG00000169372.13"/>
</dbReference>
<dbReference type="GeneID" id="8738"/>
<dbReference type="KEGG" id="hsa:8738"/>
<dbReference type="MANE-Select" id="ENST00000332896.8">
    <property type="protein sequence ID" value="ENSP00000327647.3"/>
    <property type="RefSeq nucleotide sequence ID" value="NM_003805.5"/>
    <property type="RefSeq protein sequence ID" value="NP_003796.1"/>
</dbReference>
<dbReference type="UCSC" id="uc058rts.1">
    <molecule id="P78560-1"/>
    <property type="organism name" value="human"/>
</dbReference>
<dbReference type="AGR" id="HGNC:2340"/>
<dbReference type="CTD" id="8738"/>
<dbReference type="DisGeNET" id="8738"/>
<dbReference type="GeneCards" id="CRADD"/>
<dbReference type="HGNC" id="HGNC:2340">
    <property type="gene designation" value="CRADD"/>
</dbReference>
<dbReference type="HPA" id="ENSG00000169372">
    <property type="expression patterns" value="Low tissue specificity"/>
</dbReference>
<dbReference type="MalaCards" id="CRADD"/>
<dbReference type="MIM" id="603454">
    <property type="type" value="gene"/>
</dbReference>
<dbReference type="MIM" id="614499">
    <property type="type" value="phenotype"/>
</dbReference>
<dbReference type="neXtProt" id="NX_P78560"/>
<dbReference type="OpenTargets" id="ENSG00000169372"/>
<dbReference type="Orphanet" id="88616">
    <property type="disease" value="Autosomal recessive non-syndromic intellectual disability"/>
</dbReference>
<dbReference type="PharmGKB" id="PA26860"/>
<dbReference type="VEuPathDB" id="HostDB:ENSG00000169372"/>
<dbReference type="eggNOG" id="ENOG502R26C">
    <property type="taxonomic scope" value="Eukaryota"/>
</dbReference>
<dbReference type="GeneTree" id="ENSGT00390000014448"/>
<dbReference type="HOGENOM" id="CLU_118159_0_0_1"/>
<dbReference type="InParanoid" id="P78560"/>
<dbReference type="OMA" id="GPEWECI"/>
<dbReference type="OrthoDB" id="10031931at2759"/>
<dbReference type="PAN-GO" id="P78560">
    <property type="GO annotations" value="6 GO annotations based on evolutionary models"/>
</dbReference>
<dbReference type="PhylomeDB" id="P78560"/>
<dbReference type="TreeFam" id="TF333055"/>
<dbReference type="BioCyc" id="MetaCyc:ENSG00000169372-MONOMER"/>
<dbReference type="PathwayCommons" id="P78560"/>
<dbReference type="Reactome" id="R-HSA-6803207">
    <property type="pathway name" value="TP53 Regulates Transcription of Caspase Activators and Caspases"/>
</dbReference>
<dbReference type="SignaLink" id="P78560"/>
<dbReference type="SIGNOR" id="P78560"/>
<dbReference type="BioGRID-ORCS" id="8738">
    <property type="hits" value="9 hits in 1162 CRISPR screens"/>
</dbReference>
<dbReference type="ChiTaRS" id="CRADD">
    <property type="organism name" value="human"/>
</dbReference>
<dbReference type="EvolutionaryTrace" id="P78560"/>
<dbReference type="GeneWiki" id="CRADD"/>
<dbReference type="GenomeRNAi" id="8738"/>
<dbReference type="Pharos" id="P78560">
    <property type="development level" value="Tbio"/>
</dbReference>
<dbReference type="PRO" id="PR:P78560"/>
<dbReference type="Proteomes" id="UP000005640">
    <property type="component" value="Chromosome 12"/>
</dbReference>
<dbReference type="RNAct" id="P78560">
    <property type="molecule type" value="protein"/>
</dbReference>
<dbReference type="Bgee" id="ENSG00000169372">
    <property type="expression patterns" value="Expressed in male germ line stem cell (sensu Vertebrata) in testis and 181 other cell types or tissues"/>
</dbReference>
<dbReference type="ExpressionAtlas" id="P78560">
    <property type="expression patterns" value="baseline and differential"/>
</dbReference>
<dbReference type="GO" id="GO:0005737">
    <property type="term" value="C:cytoplasm"/>
    <property type="evidence" value="ECO:0000250"/>
    <property type="project" value="UniProtKB"/>
</dbReference>
<dbReference type="GO" id="GO:0005829">
    <property type="term" value="C:cytosol"/>
    <property type="evidence" value="ECO:0000304"/>
    <property type="project" value="Reactome"/>
</dbReference>
<dbReference type="GO" id="GO:1905369">
    <property type="term" value="C:endopeptidase complex"/>
    <property type="evidence" value="ECO:0000353"/>
    <property type="project" value="ComplexPortal"/>
</dbReference>
<dbReference type="GO" id="GO:0005730">
    <property type="term" value="C:nucleolus"/>
    <property type="evidence" value="ECO:0000303"/>
    <property type="project" value="ComplexPortal"/>
</dbReference>
<dbReference type="GO" id="GO:0005634">
    <property type="term" value="C:nucleus"/>
    <property type="evidence" value="ECO:0000250"/>
    <property type="project" value="UniProtKB"/>
</dbReference>
<dbReference type="GO" id="GO:0070513">
    <property type="term" value="F:death domain binding"/>
    <property type="evidence" value="ECO:0000353"/>
    <property type="project" value="BHF-UCL"/>
</dbReference>
<dbReference type="GO" id="GO:0002020">
    <property type="term" value="F:protease binding"/>
    <property type="evidence" value="ECO:0000353"/>
    <property type="project" value="BHF-UCL"/>
</dbReference>
<dbReference type="GO" id="GO:0030674">
    <property type="term" value="F:protein-macromolecule adaptor activity"/>
    <property type="evidence" value="ECO:0000353"/>
    <property type="project" value="BHF-UCL"/>
</dbReference>
<dbReference type="GO" id="GO:0097190">
    <property type="term" value="P:apoptotic signaling pathway"/>
    <property type="evidence" value="ECO:0000315"/>
    <property type="project" value="UniProtKB"/>
</dbReference>
<dbReference type="GO" id="GO:0071260">
    <property type="term" value="P:cellular response to mechanical stimulus"/>
    <property type="evidence" value="ECO:0000270"/>
    <property type="project" value="UniProtKB"/>
</dbReference>
<dbReference type="GO" id="GO:0006974">
    <property type="term" value="P:DNA damage response"/>
    <property type="evidence" value="ECO:0000303"/>
    <property type="project" value="ComplexPortal"/>
</dbReference>
<dbReference type="GO" id="GO:0030330">
    <property type="term" value="P:DNA damage response, signal transduction by p53 class mediator"/>
    <property type="evidence" value="ECO:0000315"/>
    <property type="project" value="UniProtKB"/>
</dbReference>
<dbReference type="GO" id="GO:0008625">
    <property type="term" value="P:extrinsic apoptotic signaling pathway via death domain receptors"/>
    <property type="evidence" value="ECO:0000305"/>
    <property type="project" value="BHF-UCL"/>
</dbReference>
<dbReference type="GO" id="GO:0043065">
    <property type="term" value="P:positive regulation of apoptotic process"/>
    <property type="evidence" value="ECO:0000314"/>
    <property type="project" value="UniProtKB"/>
</dbReference>
<dbReference type="GO" id="GO:2001235">
    <property type="term" value="P:positive regulation of apoptotic signaling pathway"/>
    <property type="evidence" value="ECO:0000318"/>
    <property type="project" value="GO_Central"/>
</dbReference>
<dbReference type="CDD" id="cd08327">
    <property type="entry name" value="CARD_RAIDD"/>
    <property type="match status" value="1"/>
</dbReference>
<dbReference type="CDD" id="cd08319">
    <property type="entry name" value="Death_RAIDD"/>
    <property type="match status" value="1"/>
</dbReference>
<dbReference type="DisProt" id="DP01771"/>
<dbReference type="FunFam" id="1.10.533.10:FF:000007">
    <property type="entry name" value="death domain-containing protein CRADD isoform X1"/>
    <property type="match status" value="1"/>
</dbReference>
<dbReference type="FunFam" id="1.10.533.10:FF:000058">
    <property type="entry name" value="death domain-containing protein CRADD isoform X1"/>
    <property type="match status" value="1"/>
</dbReference>
<dbReference type="Gene3D" id="1.10.533.10">
    <property type="entry name" value="Death Domain, Fas"/>
    <property type="match status" value="2"/>
</dbReference>
<dbReference type="InterPro" id="IPR001315">
    <property type="entry name" value="CARD"/>
</dbReference>
<dbReference type="InterPro" id="IPR042148">
    <property type="entry name" value="CARD_RAIDD"/>
</dbReference>
<dbReference type="InterPro" id="IPR037939">
    <property type="entry name" value="CRADD"/>
</dbReference>
<dbReference type="InterPro" id="IPR037926">
    <property type="entry name" value="CRADD_Death"/>
</dbReference>
<dbReference type="InterPro" id="IPR011029">
    <property type="entry name" value="DEATH-like_dom_sf"/>
</dbReference>
<dbReference type="InterPro" id="IPR000488">
    <property type="entry name" value="Death_dom"/>
</dbReference>
<dbReference type="PANTHER" id="PTHR15034">
    <property type="entry name" value="DEATH DOMAIN-CONTAINING PROTEIN CRADD"/>
    <property type="match status" value="1"/>
</dbReference>
<dbReference type="PANTHER" id="PTHR15034:SF5">
    <property type="entry name" value="DEATH DOMAIN-CONTAINING PROTEIN CRADD"/>
    <property type="match status" value="1"/>
</dbReference>
<dbReference type="Pfam" id="PF00619">
    <property type="entry name" value="CARD"/>
    <property type="match status" value="1"/>
</dbReference>
<dbReference type="Pfam" id="PF00531">
    <property type="entry name" value="Death"/>
    <property type="match status" value="1"/>
</dbReference>
<dbReference type="SMART" id="SM00114">
    <property type="entry name" value="CARD"/>
    <property type="match status" value="1"/>
</dbReference>
<dbReference type="SMART" id="SM00005">
    <property type="entry name" value="DEATH"/>
    <property type="match status" value="1"/>
</dbReference>
<dbReference type="SUPFAM" id="SSF47986">
    <property type="entry name" value="DEATH domain"/>
    <property type="match status" value="2"/>
</dbReference>
<dbReference type="PROSITE" id="PS50209">
    <property type="entry name" value="CARD"/>
    <property type="match status" value="1"/>
</dbReference>
<dbReference type="PROSITE" id="PS50017">
    <property type="entry name" value="DEATH_DOMAIN"/>
    <property type="match status" value="1"/>
</dbReference>
<accession>P78560</accession>
<accession>B7Z2Q5</accession>
<reference key="1">
    <citation type="journal article" date="1997" name="Cancer Res.">
        <title>CRADD, a novel human apoptotic adaptor molecule for caspase-2, and FasL/tumor necrosis factor receptor-interacting protein RIP.</title>
        <authorList>
            <person name="Ahmad M."/>
            <person name="Srinivasula S.M."/>
            <person name="Wang L."/>
            <person name="Talanian R.V."/>
            <person name="Litwack G."/>
            <person name="Fernandes-Alnemri T."/>
            <person name="Alnemri E.S."/>
        </authorList>
    </citation>
    <scope>NUCLEOTIDE SEQUENCE [MRNA] (ISOFORM 1)</scope>
    <scope>FUNCTION</scope>
    <scope>INTERACTION WITH CASP2 AND RIPK1</scope>
    <scope>DOMAIN</scope>
    <scope>TISSUE SPECIFICITY</scope>
</reference>
<reference key="2">
    <citation type="journal article" date="1997" name="Nature">
        <title>RAIDD is a new 'death' adaptor molecule.</title>
        <authorList>
            <person name="Duan H."/>
            <person name="Dixit V.M."/>
        </authorList>
    </citation>
    <scope>NUCLEOTIDE SEQUENCE [MRNA] (ISOFORM 1)</scope>
    <scope>FUNCTION</scope>
    <scope>INTERACTION WITH CASP2; TNFRSF1A AND TRADD</scope>
    <scope>DOMAIN</scope>
    <scope>TISSUE SPECIFICITY</scope>
    <scope>MUTAGENESIS OF LEU-27 AND GLY-65</scope>
</reference>
<reference key="3">
    <citation type="journal article" date="2004" name="Nat. Genet.">
        <title>Complete sequencing and characterization of 21,243 full-length human cDNAs.</title>
        <authorList>
            <person name="Ota T."/>
            <person name="Suzuki Y."/>
            <person name="Nishikawa T."/>
            <person name="Otsuki T."/>
            <person name="Sugiyama T."/>
            <person name="Irie R."/>
            <person name="Wakamatsu A."/>
            <person name="Hayashi K."/>
            <person name="Sato H."/>
            <person name="Nagai K."/>
            <person name="Kimura K."/>
            <person name="Makita H."/>
            <person name="Sekine M."/>
            <person name="Obayashi M."/>
            <person name="Nishi T."/>
            <person name="Shibahara T."/>
            <person name="Tanaka T."/>
            <person name="Ishii S."/>
            <person name="Yamamoto J."/>
            <person name="Saito K."/>
            <person name="Kawai Y."/>
            <person name="Isono Y."/>
            <person name="Nakamura Y."/>
            <person name="Nagahari K."/>
            <person name="Murakami K."/>
            <person name="Yasuda T."/>
            <person name="Iwayanagi T."/>
            <person name="Wagatsuma M."/>
            <person name="Shiratori A."/>
            <person name="Sudo H."/>
            <person name="Hosoiri T."/>
            <person name="Kaku Y."/>
            <person name="Kodaira H."/>
            <person name="Kondo H."/>
            <person name="Sugawara M."/>
            <person name="Takahashi M."/>
            <person name="Kanda K."/>
            <person name="Yokoi T."/>
            <person name="Furuya T."/>
            <person name="Kikkawa E."/>
            <person name="Omura Y."/>
            <person name="Abe K."/>
            <person name="Kamihara K."/>
            <person name="Katsuta N."/>
            <person name="Sato K."/>
            <person name="Tanikawa M."/>
            <person name="Yamazaki M."/>
            <person name="Ninomiya K."/>
            <person name="Ishibashi T."/>
            <person name="Yamashita H."/>
            <person name="Murakawa K."/>
            <person name="Fujimori K."/>
            <person name="Tanai H."/>
            <person name="Kimata M."/>
            <person name="Watanabe M."/>
            <person name="Hiraoka S."/>
            <person name="Chiba Y."/>
            <person name="Ishida S."/>
            <person name="Ono Y."/>
            <person name="Takiguchi S."/>
            <person name="Watanabe S."/>
            <person name="Yosida M."/>
            <person name="Hotuta T."/>
            <person name="Kusano J."/>
            <person name="Kanehori K."/>
            <person name="Takahashi-Fujii A."/>
            <person name="Hara H."/>
            <person name="Tanase T.-O."/>
            <person name="Nomura Y."/>
            <person name="Togiya S."/>
            <person name="Komai F."/>
            <person name="Hara R."/>
            <person name="Takeuchi K."/>
            <person name="Arita M."/>
            <person name="Imose N."/>
            <person name="Musashino K."/>
            <person name="Yuuki H."/>
            <person name="Oshima A."/>
            <person name="Sasaki N."/>
            <person name="Aotsuka S."/>
            <person name="Yoshikawa Y."/>
            <person name="Matsunawa H."/>
            <person name="Ichihara T."/>
            <person name="Shiohata N."/>
            <person name="Sano S."/>
            <person name="Moriya S."/>
            <person name="Momiyama H."/>
            <person name="Satoh N."/>
            <person name="Takami S."/>
            <person name="Terashima Y."/>
            <person name="Suzuki O."/>
            <person name="Nakagawa S."/>
            <person name="Senoh A."/>
            <person name="Mizoguchi H."/>
            <person name="Goto Y."/>
            <person name="Shimizu F."/>
            <person name="Wakebe H."/>
            <person name="Hishigaki H."/>
            <person name="Watanabe T."/>
            <person name="Sugiyama A."/>
            <person name="Takemoto M."/>
            <person name="Kawakami B."/>
            <person name="Yamazaki M."/>
            <person name="Watanabe K."/>
            <person name="Kumagai A."/>
            <person name="Itakura S."/>
            <person name="Fukuzumi Y."/>
            <person name="Fujimori Y."/>
            <person name="Komiyama M."/>
            <person name="Tashiro H."/>
            <person name="Tanigami A."/>
            <person name="Fujiwara T."/>
            <person name="Ono T."/>
            <person name="Yamada K."/>
            <person name="Fujii Y."/>
            <person name="Ozaki K."/>
            <person name="Hirao M."/>
            <person name="Ohmori Y."/>
            <person name="Kawabata A."/>
            <person name="Hikiji T."/>
            <person name="Kobatake N."/>
            <person name="Inagaki H."/>
            <person name="Ikema Y."/>
            <person name="Okamoto S."/>
            <person name="Okitani R."/>
            <person name="Kawakami T."/>
            <person name="Noguchi S."/>
            <person name="Itoh T."/>
            <person name="Shigeta K."/>
            <person name="Senba T."/>
            <person name="Matsumura K."/>
            <person name="Nakajima Y."/>
            <person name="Mizuno T."/>
            <person name="Morinaga M."/>
            <person name="Sasaki M."/>
            <person name="Togashi T."/>
            <person name="Oyama M."/>
            <person name="Hata H."/>
            <person name="Watanabe M."/>
            <person name="Komatsu T."/>
            <person name="Mizushima-Sugano J."/>
            <person name="Satoh T."/>
            <person name="Shirai Y."/>
            <person name="Takahashi Y."/>
            <person name="Nakagawa K."/>
            <person name="Okumura K."/>
            <person name="Nagase T."/>
            <person name="Nomura N."/>
            <person name="Kikuchi H."/>
            <person name="Masuho Y."/>
            <person name="Yamashita R."/>
            <person name="Nakai K."/>
            <person name="Yada T."/>
            <person name="Nakamura Y."/>
            <person name="Ohara O."/>
            <person name="Isogai T."/>
            <person name="Sugano S."/>
        </authorList>
    </citation>
    <scope>NUCLEOTIDE SEQUENCE [LARGE SCALE MRNA] (ISOFORM 2)</scope>
    <source>
        <tissue>Brain</tissue>
    </source>
</reference>
<reference key="4">
    <citation type="journal article" date="2006" name="Nature">
        <title>The finished DNA sequence of human chromosome 12.</title>
        <authorList>
            <person name="Scherer S.E."/>
            <person name="Muzny D.M."/>
            <person name="Buhay C.J."/>
            <person name="Chen R."/>
            <person name="Cree A."/>
            <person name="Ding Y."/>
            <person name="Dugan-Rocha S."/>
            <person name="Gill R."/>
            <person name="Gunaratne P."/>
            <person name="Harris R.A."/>
            <person name="Hawes A.C."/>
            <person name="Hernandez J."/>
            <person name="Hodgson A.V."/>
            <person name="Hume J."/>
            <person name="Jackson A."/>
            <person name="Khan Z.M."/>
            <person name="Kovar-Smith C."/>
            <person name="Lewis L.R."/>
            <person name="Lozado R.J."/>
            <person name="Metzker M.L."/>
            <person name="Milosavljevic A."/>
            <person name="Miner G.R."/>
            <person name="Montgomery K.T."/>
            <person name="Morgan M.B."/>
            <person name="Nazareth L.V."/>
            <person name="Scott G."/>
            <person name="Sodergren E."/>
            <person name="Song X.-Z."/>
            <person name="Steffen D."/>
            <person name="Lovering R.C."/>
            <person name="Wheeler D.A."/>
            <person name="Worley K.C."/>
            <person name="Yuan Y."/>
            <person name="Zhang Z."/>
            <person name="Adams C.Q."/>
            <person name="Ansari-Lari M.A."/>
            <person name="Ayele M."/>
            <person name="Brown M.J."/>
            <person name="Chen G."/>
            <person name="Chen Z."/>
            <person name="Clerc-Blankenburg K.P."/>
            <person name="Davis C."/>
            <person name="Delgado O."/>
            <person name="Dinh H.H."/>
            <person name="Draper H."/>
            <person name="Gonzalez-Garay M.L."/>
            <person name="Havlak P."/>
            <person name="Jackson L.R."/>
            <person name="Jacob L.S."/>
            <person name="Kelly S.H."/>
            <person name="Li L."/>
            <person name="Li Z."/>
            <person name="Liu J."/>
            <person name="Liu W."/>
            <person name="Lu J."/>
            <person name="Maheshwari M."/>
            <person name="Nguyen B.-V."/>
            <person name="Okwuonu G.O."/>
            <person name="Pasternak S."/>
            <person name="Perez L.M."/>
            <person name="Plopper F.J.H."/>
            <person name="Santibanez J."/>
            <person name="Shen H."/>
            <person name="Tabor P.E."/>
            <person name="Verduzco D."/>
            <person name="Waldron L."/>
            <person name="Wang Q."/>
            <person name="Williams G.A."/>
            <person name="Zhang J."/>
            <person name="Zhou J."/>
            <person name="Allen C.C."/>
            <person name="Amin A.G."/>
            <person name="Anyalebechi V."/>
            <person name="Bailey M."/>
            <person name="Barbaria J.A."/>
            <person name="Bimage K.E."/>
            <person name="Bryant N.P."/>
            <person name="Burch P.E."/>
            <person name="Burkett C.E."/>
            <person name="Burrell K.L."/>
            <person name="Calderon E."/>
            <person name="Cardenas V."/>
            <person name="Carter K."/>
            <person name="Casias K."/>
            <person name="Cavazos I."/>
            <person name="Cavazos S.R."/>
            <person name="Ceasar H."/>
            <person name="Chacko J."/>
            <person name="Chan S.N."/>
            <person name="Chavez D."/>
            <person name="Christopoulos C."/>
            <person name="Chu J."/>
            <person name="Cockrell R."/>
            <person name="Cox C.D."/>
            <person name="Dang M."/>
            <person name="Dathorne S.R."/>
            <person name="David R."/>
            <person name="Davis C.M."/>
            <person name="Davy-Carroll L."/>
            <person name="Deshazo D.R."/>
            <person name="Donlin J.E."/>
            <person name="D'Souza L."/>
            <person name="Eaves K.A."/>
            <person name="Egan A."/>
            <person name="Emery-Cohen A.J."/>
            <person name="Escotto M."/>
            <person name="Flagg N."/>
            <person name="Forbes L.D."/>
            <person name="Gabisi A.M."/>
            <person name="Garza M."/>
            <person name="Hamilton C."/>
            <person name="Henderson N."/>
            <person name="Hernandez O."/>
            <person name="Hines S."/>
            <person name="Hogues M.E."/>
            <person name="Huang M."/>
            <person name="Idlebird D.G."/>
            <person name="Johnson R."/>
            <person name="Jolivet A."/>
            <person name="Jones S."/>
            <person name="Kagan R."/>
            <person name="King L.M."/>
            <person name="Leal B."/>
            <person name="Lebow H."/>
            <person name="Lee S."/>
            <person name="LeVan J.M."/>
            <person name="Lewis L.C."/>
            <person name="London P."/>
            <person name="Lorensuhewa L.M."/>
            <person name="Loulseged H."/>
            <person name="Lovett D.A."/>
            <person name="Lucier A."/>
            <person name="Lucier R.L."/>
            <person name="Ma J."/>
            <person name="Madu R.C."/>
            <person name="Mapua P."/>
            <person name="Martindale A.D."/>
            <person name="Martinez E."/>
            <person name="Massey E."/>
            <person name="Mawhiney S."/>
            <person name="Meador M.G."/>
            <person name="Mendez S."/>
            <person name="Mercado C."/>
            <person name="Mercado I.C."/>
            <person name="Merritt C.E."/>
            <person name="Miner Z.L."/>
            <person name="Minja E."/>
            <person name="Mitchell T."/>
            <person name="Mohabbat F."/>
            <person name="Mohabbat K."/>
            <person name="Montgomery B."/>
            <person name="Moore N."/>
            <person name="Morris S."/>
            <person name="Munidasa M."/>
            <person name="Ngo R.N."/>
            <person name="Nguyen N.B."/>
            <person name="Nickerson E."/>
            <person name="Nwaokelemeh O.O."/>
            <person name="Nwokenkwo S."/>
            <person name="Obregon M."/>
            <person name="Oguh M."/>
            <person name="Oragunye N."/>
            <person name="Oviedo R.J."/>
            <person name="Parish B.J."/>
            <person name="Parker D.N."/>
            <person name="Parrish J."/>
            <person name="Parks K.L."/>
            <person name="Paul H.A."/>
            <person name="Payton B.A."/>
            <person name="Perez A."/>
            <person name="Perrin W."/>
            <person name="Pickens A."/>
            <person name="Primus E.L."/>
            <person name="Pu L.-L."/>
            <person name="Puazo M."/>
            <person name="Quiles M.M."/>
            <person name="Quiroz J.B."/>
            <person name="Rabata D."/>
            <person name="Reeves K."/>
            <person name="Ruiz S.J."/>
            <person name="Shao H."/>
            <person name="Sisson I."/>
            <person name="Sonaike T."/>
            <person name="Sorelle R.P."/>
            <person name="Sutton A.E."/>
            <person name="Svatek A.F."/>
            <person name="Svetz L.A."/>
            <person name="Tamerisa K.S."/>
            <person name="Taylor T.R."/>
            <person name="Teague B."/>
            <person name="Thomas N."/>
            <person name="Thorn R.D."/>
            <person name="Trejos Z.Y."/>
            <person name="Trevino B.K."/>
            <person name="Ukegbu O.N."/>
            <person name="Urban J.B."/>
            <person name="Vasquez L.I."/>
            <person name="Vera V.A."/>
            <person name="Villasana D.M."/>
            <person name="Wang L."/>
            <person name="Ward-Moore S."/>
            <person name="Warren J.T."/>
            <person name="Wei X."/>
            <person name="White F."/>
            <person name="Williamson A.L."/>
            <person name="Wleczyk R."/>
            <person name="Wooden H.S."/>
            <person name="Wooden S.H."/>
            <person name="Yen J."/>
            <person name="Yoon L."/>
            <person name="Yoon V."/>
            <person name="Zorrilla S.E."/>
            <person name="Nelson D."/>
            <person name="Kucherlapati R."/>
            <person name="Weinstock G."/>
            <person name="Gibbs R.A."/>
        </authorList>
    </citation>
    <scope>NUCLEOTIDE SEQUENCE [LARGE SCALE GENOMIC DNA]</scope>
</reference>
<reference key="5">
    <citation type="journal article" date="2004" name="Genome Res.">
        <title>The status, quality, and expansion of the NIH full-length cDNA project: the Mammalian Gene Collection (MGC).</title>
        <authorList>
            <consortium name="The MGC Project Team"/>
        </authorList>
    </citation>
    <scope>NUCLEOTIDE SEQUENCE [LARGE SCALE MRNA] (ISOFORM 1)</scope>
    <source>
        <tissue>Colon</tissue>
    </source>
</reference>
<reference key="6">
    <citation type="journal article" date="2004" name="Science">
        <title>The PIDDosome, a protein complex implicated in activation of caspase-2 in response to genotoxic stress.</title>
        <authorList>
            <person name="Tinel A."/>
            <person name="Tschopp J."/>
        </authorList>
    </citation>
    <scope>FUNCTION</scope>
    <scope>IDENTIFICATION IN PIDDOSOME COMPLEX</scope>
</reference>
<reference key="7">
    <citation type="journal article" date="2006" name="Oncogene">
        <title>Functional connection between p53 and caspase-2 is essential for apoptosis induced by DNA damage.</title>
        <authorList>
            <person name="Vakifahmetoglu H."/>
            <person name="Olsson M."/>
            <person name="Orrenius S."/>
            <person name="Zhivotovsky B."/>
        </authorList>
    </citation>
    <scope>FUNCTION</scope>
    <scope>IDENTIFICATION IN PIDDOSOME COMPLEX</scope>
</reference>
<reference key="8">
    <citation type="journal article" date="1998" name="Cell">
        <title>Solution structure of the RAIDD CARD and model for CARD/CARD interaction in caspase-2 and caspase-9 recruitment.</title>
        <authorList>
            <person name="Chou J.J."/>
            <person name="Matsuo H."/>
            <person name="Duan H."/>
            <person name="Wagner G."/>
        </authorList>
    </citation>
    <scope>STRUCTURE BY NMR OF 1-100</scope>
</reference>
<reference key="9">
    <citation type="journal article" date="2007" name="EMBO J.">
        <title>Autoproteolysis of PIDD marks the bifurcation between pro-death caspase-2 and pro-survival NF-kappaB pathway.</title>
        <authorList>
            <person name="Tinel A."/>
            <person name="Janssens S."/>
            <person name="Lippens S."/>
            <person name="Cuenin S."/>
            <person name="Logette E."/>
            <person name="Jaccard B."/>
            <person name="Quadroni M."/>
            <person name="Tschopp J."/>
        </authorList>
    </citation>
    <scope>FUNCTION</scope>
    <scope>INTERACTION WITH PIDD1</scope>
</reference>
<reference evidence="12" key="10">
    <citation type="journal article" date="2007" name="Cell">
        <title>Death domain assembly mechanism revealed by crystal structure of the oligomeric PIDDosome core complex.</title>
        <authorList>
            <person name="Park H.H."/>
            <person name="Logette E."/>
            <person name="Raunser S."/>
            <person name="Cuenin S."/>
            <person name="Walz T."/>
            <person name="Tschopp J."/>
            <person name="Wu H."/>
        </authorList>
    </citation>
    <scope>X-RAY CRYSTALLOGRAPHY (3.20 ANGSTROMS) OF 94-199 IN COMPLEX WITH PIDD1</scope>
    <scope>FUNCTION</scope>
    <scope>DOMAIN</scope>
    <scope>MUTAGENESIS OF ASN-121; GLN-125; LEU-136; GLN-142; TYR-146; ARG-147; LYS-149; HIS-154; VAL-156; GLN-169; ARG-170; GLU-188 AND VAL-189</scope>
</reference>
<reference key="11">
    <citation type="journal article" date="2012" name="PLoS ONE">
        <title>Genetic mapping and exome sequencing identify variants associated with five novel diseases.</title>
        <authorList>
            <person name="Puffenberger E.G."/>
            <person name="Jinks R.N."/>
            <person name="Sougnez C."/>
            <person name="Cibulskis K."/>
            <person name="Willert R.A."/>
            <person name="Achilly N.P."/>
            <person name="Cassidy R.P."/>
            <person name="Fiorentini C.J."/>
            <person name="Heiken K.F."/>
            <person name="Lawrence J.J."/>
            <person name="Mahoney M.H."/>
            <person name="Miller C.J."/>
            <person name="Nair D.T."/>
            <person name="Politi K.A."/>
            <person name="Worcester K.N."/>
            <person name="Setton R.A."/>
            <person name="Dipiazza R."/>
            <person name="Sherman E.A."/>
            <person name="Eastman J.T."/>
            <person name="Francklyn C."/>
            <person name="Robey-Bond S."/>
            <person name="Rider N.L."/>
            <person name="Gabriel S."/>
            <person name="Morton D.H."/>
            <person name="Strauss K.A."/>
        </authorList>
    </citation>
    <scope>VARIANT MRT34 ARG-128</scope>
</reference>
<organism>
    <name type="scientific">Homo sapiens</name>
    <name type="common">Human</name>
    <dbReference type="NCBI Taxonomy" id="9606"/>
    <lineage>
        <taxon>Eukaryota</taxon>
        <taxon>Metazoa</taxon>
        <taxon>Chordata</taxon>
        <taxon>Craniata</taxon>
        <taxon>Vertebrata</taxon>
        <taxon>Euteleostomi</taxon>
        <taxon>Mammalia</taxon>
        <taxon>Eutheria</taxon>
        <taxon>Euarchontoglires</taxon>
        <taxon>Primates</taxon>
        <taxon>Haplorrhini</taxon>
        <taxon>Catarrhini</taxon>
        <taxon>Hominidae</taxon>
        <taxon>Homo</taxon>
    </lineage>
</organism>
<keyword id="KW-0002">3D-structure</keyword>
<keyword id="KW-0025">Alternative splicing</keyword>
<keyword id="KW-0053">Apoptosis</keyword>
<keyword id="KW-0963">Cytoplasm</keyword>
<keyword id="KW-0225">Disease variant</keyword>
<keyword id="KW-0991">Intellectual disability</keyword>
<keyword id="KW-0451">Lissencephaly</keyword>
<keyword id="KW-0539">Nucleus</keyword>
<keyword id="KW-1267">Proteomics identification</keyword>
<keyword id="KW-1185">Reference proteome</keyword>
<name>CRADD_HUMAN</name>
<proteinExistence type="evidence at protein level"/>
<gene>
    <name type="primary">CRADD</name>
    <name type="synonym">RAIDD</name>
</gene>
<protein>
    <recommendedName>
        <fullName>Death domain-containing protein CRADD</fullName>
    </recommendedName>
    <alternativeName>
        <fullName>Caspase and RIP adapter with death domain</fullName>
    </alternativeName>
    <alternativeName>
        <fullName>RIP-associated protein with a death domain</fullName>
    </alternativeName>
</protein>
<comment type="function">
    <text evidence="4 5 6 7 9 10">Adapter protein that associates with PIDD1 and the caspase CASP2 to form the PIDDosome, a complex that activates CASP2 and triggers apoptosis (PubMed:15073321, PubMed:16652156, PubMed:17159900, PubMed:17289572, PubMed:9044836). Also recruits CASP2 to the TNFR-1 signaling complex through its interaction with RIPK1 and TRADD and may play a role in the tumor necrosis factor-mediated signaling pathway (PubMed:8985253).</text>
</comment>
<comment type="subunit">
    <text evidence="4 5 6 7 9 10">Forms a complex named the PIDDosome with PIDD1 and CASP2 (PubMed:15073321, PubMed:16652156, PubMed:17159900, PubMed:17289572, PubMed:8985253, PubMed:9044836). Interacts (via Death domain) with RIPK1 (via Death domain); the interaction is direct (PubMed:9044836). Interacts with TRADD (PubMed:8985253). Interacts with TNFRSF1A (PubMed:8985253).</text>
</comment>
<comment type="interaction">
    <interactant intactId="EBI-520375">
        <id>P78560</id>
    </interactant>
    <interactant intactId="EBI-77797">
        <id>P35609</id>
        <label>ACTN2</label>
    </interactant>
    <organismsDiffer>false</organismsDiffer>
    <experiments>3</experiments>
</comment>
<comment type="interaction">
    <interactant intactId="EBI-520375">
        <id>P78560</id>
    </interactant>
    <interactant intactId="EBI-741261">
        <id>Q8NEU8</id>
        <label>APPL2</label>
    </interactant>
    <organismsDiffer>false</organismsDiffer>
    <experiments>4</experiments>
</comment>
<comment type="interaction">
    <interactant intactId="EBI-520375">
        <id>P78560</id>
    </interactant>
    <interactant intactId="EBI-2892592">
        <id>Q8N3I7</id>
        <label>BBS5</label>
    </interactant>
    <organismsDiffer>false</organismsDiffer>
    <experiments>3</experiments>
</comment>
<comment type="interaction">
    <interactant intactId="EBI-520375">
        <id>P78560</id>
    </interactant>
    <interactant intactId="EBI-520342">
        <id>P42575</id>
        <label>CASP2</label>
    </interactant>
    <organismsDiffer>false</organismsDiffer>
    <experiments>31</experiments>
</comment>
<comment type="interaction">
    <interactant intactId="EBI-520375">
        <id>P78560</id>
    </interactant>
    <interactant intactId="EBI-4397613">
        <id>Q7L273</id>
        <label>KCTD9</label>
    </interactant>
    <organismsDiffer>false</organismsDiffer>
    <experiments>3</experiments>
</comment>
<comment type="interaction">
    <interactant intactId="EBI-520375">
        <id>P78560</id>
    </interactant>
    <interactant intactId="EBI-520427">
        <id>Q9HB75</id>
        <label>PIDD1</label>
    </interactant>
    <organismsDiffer>false</organismsDiffer>
    <experiments>7</experiments>
</comment>
<comment type="interaction">
    <interactant intactId="EBI-520375">
        <id>P78560</id>
    </interactant>
    <interactant intactId="EBI-2130429">
        <id>Q9BYV2</id>
        <label>TRIM54</label>
    </interactant>
    <organismsDiffer>false</organismsDiffer>
    <experiments>3</experiments>
</comment>
<comment type="interaction">
    <interactant intactId="EBI-520375">
        <id>P78560</id>
    </interactant>
    <interactant intactId="EBI-9675698">
        <id>P14079</id>
        <label>tax</label>
    </interactant>
    <organismsDiffer>true</organismsDiffer>
    <experiments>3</experiments>
</comment>
<comment type="subcellular location">
    <subcellularLocation>
        <location evidence="1">Cytoplasm</location>
    </subcellularLocation>
    <subcellularLocation>
        <location evidence="1">Nucleus</location>
    </subcellularLocation>
</comment>
<comment type="alternative products">
    <event type="alternative splicing"/>
    <isoform>
        <id>P78560-1</id>
        <name>1</name>
        <sequence type="displayed"/>
    </isoform>
    <isoform>
        <id>P78560-2</id>
        <name>2</name>
        <sequence type="described" ref="VSP_056892"/>
    </isoform>
</comment>
<comment type="tissue specificity">
    <text evidence="9 10">Constitutively expressed in most tissues, with particularly high expression in adult heart, testis, liver, skeletal muscle, fetal liver and kidney.</text>
</comment>
<comment type="domain">
    <text evidence="7 10">The Death domain mediates the interaction with PIDD1 and the formation of a complex composed of 5 PIDD1 and 7 CRADD proteins which in turn probably recruit 7 CASP2 to form the PIDDosome (PubMed:17289572). The Death domain mediates a direct interaction with the Death domain of RIPK1 (PubMed:9044836).</text>
</comment>
<comment type="domain">
    <text evidence="9 10">The CARD domain mediates a direct interaction with CASP2.</text>
</comment>
<comment type="disease" evidence="8">
    <disease id="DI-03395">
        <name>Intellectual developmental disorder, autosomal recessive 34, with variant lissencephaly</name>
        <acronym>MRT34</acronym>
        <description>A disorder characterized by mild to moderate intellectual disability, megalencephaly or enlarged head circumference, and a mild variant of lissencephaly with anterior-predominant pachygyria with shallow and unusually wide sulci and mildly thickened cortex. Some patients may have seizures.</description>
        <dbReference type="MIM" id="614499"/>
    </disease>
    <text>The disease is caused by variants affecting the gene represented in this entry.</text>
</comment>
<evidence type="ECO:0000250" key="1">
    <source>
        <dbReference type="UniProtKB" id="O88843"/>
    </source>
</evidence>
<evidence type="ECO:0000255" key="2">
    <source>
        <dbReference type="PROSITE-ProRule" id="PRU00046"/>
    </source>
</evidence>
<evidence type="ECO:0000255" key="3">
    <source>
        <dbReference type="PROSITE-ProRule" id="PRU00064"/>
    </source>
</evidence>
<evidence type="ECO:0000269" key="4">
    <source>
    </source>
</evidence>
<evidence type="ECO:0000269" key="5">
    <source>
    </source>
</evidence>
<evidence type="ECO:0000269" key="6">
    <source>
    </source>
</evidence>
<evidence type="ECO:0000269" key="7">
    <source>
    </source>
</evidence>
<evidence type="ECO:0000269" key="8">
    <source>
    </source>
</evidence>
<evidence type="ECO:0000269" key="9">
    <source>
    </source>
</evidence>
<evidence type="ECO:0000269" key="10">
    <source>
    </source>
</evidence>
<evidence type="ECO:0000303" key="11">
    <source>
    </source>
</evidence>
<evidence type="ECO:0007744" key="12">
    <source>
        <dbReference type="PDB" id="2OF5"/>
    </source>
</evidence>
<evidence type="ECO:0007829" key="13">
    <source>
        <dbReference type="PDB" id="2O71"/>
    </source>
</evidence>
<evidence type="ECO:0007829" key="14">
    <source>
        <dbReference type="PDB" id="3CRD"/>
    </source>
</evidence>
<sequence length="199" mass="22745">MEARDKQVLRSLRLELGAEVLVEGLVLQYLYQEGILTENHIQEINAQTTGLRKTMLLLDILPSRGPKAFDTFLDSLQEFPWVREKLKKAREEAMTDLPAGDRLTGIPSHILNSSPSDRQINQLAQRLGPEWEPMVLSLGLSQTDIYRCKANHPHNVQSQVVEAFIRWRQRFGKQATFQSLHNGLRAVEVDPSLLLHMLE</sequence>